<proteinExistence type="evidence at protein level"/>
<sequence>MKQLTILGSTGSIGNSTLSVVRANPELFKVTALVAGRNVREMAQQCLEFSPRYAAMSDEHSAKSLRLLLAEQGSDTEVYSGETAACELAALDDVDQVMAAIVGIAGLPSTLAAIRAGKQVLLANKESLITCGKLFMDEVKRSRAQLLPIDSEHNAIFQSLPERIQRQLGYSSLNENGVSRIILTGSGGPFRETPLSQFSDVTPDQACAHPNWSMGRKISVDSATMMNKGLEYIEARWLFNASAEQIEVVLHPQSVIHSMVRYHDGSILAQMGTPDMRTPIAHAMAYPMRVSSGVAPLDFCKVGALTFTTPDYQRYPCLKLAIDACNAGQAATTALNAANEISVMAFLDSKIRFTDIEVINRTVVEGLLLSEPTSVEEVLVIDRKARDVAAQVIAKLNN</sequence>
<evidence type="ECO:0000255" key="1">
    <source>
        <dbReference type="HAMAP-Rule" id="MF_00183"/>
    </source>
</evidence>
<evidence type="ECO:0007829" key="2">
    <source>
        <dbReference type="PDB" id="3IIE"/>
    </source>
</evidence>
<gene>
    <name evidence="1" type="primary">dxr</name>
    <name type="ordered locus">YPK_1070</name>
</gene>
<feature type="chain" id="PRO_1000098532" description="1-deoxy-D-xylulose 5-phosphate reductoisomerase">
    <location>
        <begin position="1"/>
        <end position="398"/>
    </location>
</feature>
<feature type="binding site" evidence="1">
    <location>
        <position position="10"/>
    </location>
    <ligand>
        <name>NADPH</name>
        <dbReference type="ChEBI" id="CHEBI:57783"/>
    </ligand>
</feature>
<feature type="binding site" evidence="1">
    <location>
        <position position="11"/>
    </location>
    <ligand>
        <name>NADPH</name>
        <dbReference type="ChEBI" id="CHEBI:57783"/>
    </ligand>
</feature>
<feature type="binding site" evidence="1">
    <location>
        <position position="12"/>
    </location>
    <ligand>
        <name>NADPH</name>
        <dbReference type="ChEBI" id="CHEBI:57783"/>
    </ligand>
</feature>
<feature type="binding site" evidence="1">
    <location>
        <position position="13"/>
    </location>
    <ligand>
        <name>NADPH</name>
        <dbReference type="ChEBI" id="CHEBI:57783"/>
    </ligand>
</feature>
<feature type="binding site" evidence="1">
    <location>
        <position position="36"/>
    </location>
    <ligand>
        <name>NADPH</name>
        <dbReference type="ChEBI" id="CHEBI:57783"/>
    </ligand>
</feature>
<feature type="binding site" evidence="1">
    <location>
        <position position="37"/>
    </location>
    <ligand>
        <name>NADPH</name>
        <dbReference type="ChEBI" id="CHEBI:57783"/>
    </ligand>
</feature>
<feature type="binding site" evidence="1">
    <location>
        <position position="38"/>
    </location>
    <ligand>
        <name>NADPH</name>
        <dbReference type="ChEBI" id="CHEBI:57783"/>
    </ligand>
</feature>
<feature type="binding site" evidence="1">
    <location>
        <position position="124"/>
    </location>
    <ligand>
        <name>NADPH</name>
        <dbReference type="ChEBI" id="CHEBI:57783"/>
    </ligand>
</feature>
<feature type="binding site" evidence="1">
    <location>
        <position position="125"/>
    </location>
    <ligand>
        <name>1-deoxy-D-xylulose 5-phosphate</name>
        <dbReference type="ChEBI" id="CHEBI:57792"/>
    </ligand>
</feature>
<feature type="binding site" evidence="1">
    <location>
        <position position="126"/>
    </location>
    <ligand>
        <name>NADPH</name>
        <dbReference type="ChEBI" id="CHEBI:57783"/>
    </ligand>
</feature>
<feature type="binding site" evidence="1">
    <location>
        <position position="150"/>
    </location>
    <ligand>
        <name>Mn(2+)</name>
        <dbReference type="ChEBI" id="CHEBI:29035"/>
    </ligand>
</feature>
<feature type="binding site" evidence="1">
    <location>
        <position position="151"/>
    </location>
    <ligand>
        <name>1-deoxy-D-xylulose 5-phosphate</name>
        <dbReference type="ChEBI" id="CHEBI:57792"/>
    </ligand>
</feature>
<feature type="binding site" evidence="1">
    <location>
        <position position="152"/>
    </location>
    <ligand>
        <name>1-deoxy-D-xylulose 5-phosphate</name>
        <dbReference type="ChEBI" id="CHEBI:57792"/>
    </ligand>
</feature>
<feature type="binding site" evidence="1">
    <location>
        <position position="152"/>
    </location>
    <ligand>
        <name>Mn(2+)</name>
        <dbReference type="ChEBI" id="CHEBI:29035"/>
    </ligand>
</feature>
<feature type="binding site" evidence="1">
    <location>
        <position position="186"/>
    </location>
    <ligand>
        <name>1-deoxy-D-xylulose 5-phosphate</name>
        <dbReference type="ChEBI" id="CHEBI:57792"/>
    </ligand>
</feature>
<feature type="binding site" evidence="1">
    <location>
        <position position="209"/>
    </location>
    <ligand>
        <name>1-deoxy-D-xylulose 5-phosphate</name>
        <dbReference type="ChEBI" id="CHEBI:57792"/>
    </ligand>
</feature>
<feature type="binding site" evidence="1">
    <location>
        <position position="215"/>
    </location>
    <ligand>
        <name>NADPH</name>
        <dbReference type="ChEBI" id="CHEBI:57783"/>
    </ligand>
</feature>
<feature type="binding site" evidence="1">
    <location>
        <position position="222"/>
    </location>
    <ligand>
        <name>1-deoxy-D-xylulose 5-phosphate</name>
        <dbReference type="ChEBI" id="CHEBI:57792"/>
    </ligand>
</feature>
<feature type="binding site" evidence="1">
    <location>
        <position position="227"/>
    </location>
    <ligand>
        <name>1-deoxy-D-xylulose 5-phosphate</name>
        <dbReference type="ChEBI" id="CHEBI:57792"/>
    </ligand>
</feature>
<feature type="binding site" evidence="1">
    <location>
        <position position="228"/>
    </location>
    <ligand>
        <name>1-deoxy-D-xylulose 5-phosphate</name>
        <dbReference type="ChEBI" id="CHEBI:57792"/>
    </ligand>
</feature>
<feature type="binding site" evidence="1">
    <location>
        <position position="231"/>
    </location>
    <ligand>
        <name>1-deoxy-D-xylulose 5-phosphate</name>
        <dbReference type="ChEBI" id="CHEBI:57792"/>
    </ligand>
</feature>
<feature type="binding site" evidence="1">
    <location>
        <position position="231"/>
    </location>
    <ligand>
        <name>Mn(2+)</name>
        <dbReference type="ChEBI" id="CHEBI:29035"/>
    </ligand>
</feature>
<feature type="strand" evidence="2">
    <location>
        <begin position="2"/>
        <end position="8"/>
    </location>
</feature>
<feature type="helix" evidence="2">
    <location>
        <begin position="12"/>
        <end position="23"/>
    </location>
</feature>
<feature type="turn" evidence="2">
    <location>
        <begin position="25"/>
        <end position="27"/>
    </location>
</feature>
<feature type="strand" evidence="2">
    <location>
        <begin position="28"/>
        <end position="34"/>
    </location>
</feature>
<feature type="helix" evidence="2">
    <location>
        <begin position="39"/>
        <end position="49"/>
    </location>
</feature>
<feature type="strand" evidence="2">
    <location>
        <begin position="52"/>
        <end position="58"/>
    </location>
</feature>
<feature type="helix" evidence="2">
    <location>
        <begin position="59"/>
        <end position="71"/>
    </location>
</feature>
<feature type="strand" evidence="2">
    <location>
        <begin position="77"/>
        <end position="81"/>
    </location>
</feature>
<feature type="helix" evidence="2">
    <location>
        <begin position="82"/>
        <end position="88"/>
    </location>
</feature>
<feature type="strand" evidence="2">
    <location>
        <begin position="96"/>
        <end position="99"/>
    </location>
</feature>
<feature type="helix" evidence="2">
    <location>
        <begin position="104"/>
        <end position="106"/>
    </location>
</feature>
<feature type="helix" evidence="2">
    <location>
        <begin position="107"/>
        <end position="115"/>
    </location>
</feature>
<feature type="strand" evidence="2">
    <location>
        <begin position="119"/>
        <end position="122"/>
    </location>
</feature>
<feature type="helix" evidence="2">
    <location>
        <begin position="126"/>
        <end position="142"/>
    </location>
</feature>
<feature type="strand" evidence="2">
    <location>
        <begin position="145"/>
        <end position="148"/>
    </location>
</feature>
<feature type="helix" evidence="2">
    <location>
        <begin position="151"/>
        <end position="158"/>
    </location>
</feature>
<feature type="helix" evidence="2">
    <location>
        <begin position="162"/>
        <end position="166"/>
    </location>
</feature>
<feature type="turn" evidence="2">
    <location>
        <begin position="167"/>
        <end position="169"/>
    </location>
</feature>
<feature type="helix" evidence="2">
    <location>
        <begin position="174"/>
        <end position="176"/>
    </location>
</feature>
<feature type="strand" evidence="2">
    <location>
        <begin position="178"/>
        <end position="185"/>
    </location>
</feature>
<feature type="strand" evidence="2">
    <location>
        <begin position="191"/>
        <end position="193"/>
    </location>
</feature>
<feature type="helix" evidence="2">
    <location>
        <begin position="195"/>
        <end position="200"/>
    </location>
</feature>
<feature type="turn" evidence="2">
    <location>
        <begin position="203"/>
        <end position="205"/>
    </location>
</feature>
<feature type="helix" evidence="2">
    <location>
        <begin position="217"/>
        <end position="223"/>
    </location>
</feature>
<feature type="helix" evidence="2">
    <location>
        <begin position="226"/>
        <end position="239"/>
    </location>
</feature>
<feature type="helix" evidence="2">
    <location>
        <begin position="243"/>
        <end position="245"/>
    </location>
</feature>
<feature type="strand" evidence="2">
    <location>
        <begin position="246"/>
        <end position="250"/>
    </location>
</feature>
<feature type="strand" evidence="2">
    <location>
        <begin position="256"/>
        <end position="262"/>
    </location>
</feature>
<feature type="strand" evidence="2">
    <location>
        <begin position="267"/>
        <end position="271"/>
    </location>
</feature>
<feature type="helix" evidence="2">
    <location>
        <begin position="277"/>
        <end position="285"/>
    </location>
</feature>
<feature type="turn" evidence="2">
    <location>
        <begin position="312"/>
        <end position="314"/>
    </location>
</feature>
<feature type="helix" evidence="2">
    <location>
        <begin position="316"/>
        <end position="327"/>
    </location>
</feature>
<feature type="helix" evidence="2">
    <location>
        <begin position="329"/>
        <end position="347"/>
    </location>
</feature>
<feature type="helix" evidence="2">
    <location>
        <begin position="355"/>
        <end position="365"/>
    </location>
</feature>
<feature type="helix" evidence="2">
    <location>
        <begin position="375"/>
        <end position="394"/>
    </location>
</feature>
<protein>
    <recommendedName>
        <fullName evidence="1">1-deoxy-D-xylulose 5-phosphate reductoisomerase</fullName>
        <shortName evidence="1">DXP reductoisomerase</shortName>
        <ecNumber evidence="1">1.1.1.267</ecNumber>
    </recommendedName>
    <alternativeName>
        <fullName evidence="1">1-deoxyxylulose-5-phosphate reductoisomerase</fullName>
    </alternativeName>
    <alternativeName>
        <fullName evidence="1">2-C-methyl-D-erythritol 4-phosphate synthase</fullName>
    </alternativeName>
</protein>
<dbReference type="EC" id="1.1.1.267" evidence="1"/>
<dbReference type="EMBL" id="CP000950">
    <property type="protein sequence ID" value="ACA67371.1"/>
    <property type="molecule type" value="Genomic_DNA"/>
</dbReference>
<dbReference type="PDB" id="3IIE">
    <property type="method" value="X-ray"/>
    <property type="resolution" value="2.21 A"/>
    <property type="chains" value="A/B=1-398"/>
</dbReference>
<dbReference type="PDBsum" id="3IIE"/>
<dbReference type="SMR" id="B1JQG4"/>
<dbReference type="KEGG" id="ypy:YPK_1070"/>
<dbReference type="PATRIC" id="fig|502800.11.peg.1702"/>
<dbReference type="UniPathway" id="UPA00056">
    <property type="reaction ID" value="UER00092"/>
</dbReference>
<dbReference type="EvolutionaryTrace" id="B1JQG4"/>
<dbReference type="GO" id="GO:0030604">
    <property type="term" value="F:1-deoxy-D-xylulose-5-phosphate reductoisomerase activity"/>
    <property type="evidence" value="ECO:0007669"/>
    <property type="project" value="UniProtKB-UniRule"/>
</dbReference>
<dbReference type="GO" id="GO:0030145">
    <property type="term" value="F:manganese ion binding"/>
    <property type="evidence" value="ECO:0007669"/>
    <property type="project" value="TreeGrafter"/>
</dbReference>
<dbReference type="GO" id="GO:0070402">
    <property type="term" value="F:NADPH binding"/>
    <property type="evidence" value="ECO:0007669"/>
    <property type="project" value="InterPro"/>
</dbReference>
<dbReference type="GO" id="GO:0051484">
    <property type="term" value="P:isopentenyl diphosphate biosynthetic process, methylerythritol 4-phosphate pathway involved in terpenoid biosynthetic process"/>
    <property type="evidence" value="ECO:0007669"/>
    <property type="project" value="TreeGrafter"/>
</dbReference>
<dbReference type="FunFam" id="1.10.1740.10:FF:000004">
    <property type="entry name" value="1-deoxy-D-xylulose 5-phosphate reductoisomerase"/>
    <property type="match status" value="1"/>
</dbReference>
<dbReference type="FunFam" id="3.40.50.720:FF:000045">
    <property type="entry name" value="1-deoxy-D-xylulose 5-phosphate reductoisomerase"/>
    <property type="match status" value="1"/>
</dbReference>
<dbReference type="Gene3D" id="1.10.1740.10">
    <property type="match status" value="1"/>
</dbReference>
<dbReference type="Gene3D" id="3.40.50.720">
    <property type="entry name" value="NAD(P)-binding Rossmann-like Domain"/>
    <property type="match status" value="1"/>
</dbReference>
<dbReference type="HAMAP" id="MF_00183">
    <property type="entry name" value="DXP_reductoisom"/>
    <property type="match status" value="1"/>
</dbReference>
<dbReference type="InterPro" id="IPR003821">
    <property type="entry name" value="DXP_reductoisomerase"/>
</dbReference>
<dbReference type="InterPro" id="IPR013644">
    <property type="entry name" value="DXP_reductoisomerase_C"/>
</dbReference>
<dbReference type="InterPro" id="IPR013512">
    <property type="entry name" value="DXP_reductoisomerase_N"/>
</dbReference>
<dbReference type="InterPro" id="IPR026877">
    <property type="entry name" value="DXPR_C"/>
</dbReference>
<dbReference type="InterPro" id="IPR036169">
    <property type="entry name" value="DXPR_C_sf"/>
</dbReference>
<dbReference type="InterPro" id="IPR036291">
    <property type="entry name" value="NAD(P)-bd_dom_sf"/>
</dbReference>
<dbReference type="NCBIfam" id="TIGR00243">
    <property type="entry name" value="Dxr"/>
    <property type="match status" value="1"/>
</dbReference>
<dbReference type="NCBIfam" id="NF003938">
    <property type="entry name" value="PRK05447.1-1"/>
    <property type="match status" value="1"/>
</dbReference>
<dbReference type="NCBIfam" id="NF009114">
    <property type="entry name" value="PRK12464.1"/>
    <property type="match status" value="1"/>
</dbReference>
<dbReference type="PANTHER" id="PTHR30525">
    <property type="entry name" value="1-DEOXY-D-XYLULOSE 5-PHOSPHATE REDUCTOISOMERASE"/>
    <property type="match status" value="1"/>
</dbReference>
<dbReference type="PANTHER" id="PTHR30525:SF0">
    <property type="entry name" value="1-DEOXY-D-XYLULOSE 5-PHOSPHATE REDUCTOISOMERASE, CHLOROPLASTIC"/>
    <property type="match status" value="1"/>
</dbReference>
<dbReference type="Pfam" id="PF08436">
    <property type="entry name" value="DXP_redisom_C"/>
    <property type="match status" value="1"/>
</dbReference>
<dbReference type="Pfam" id="PF02670">
    <property type="entry name" value="DXP_reductoisom"/>
    <property type="match status" value="1"/>
</dbReference>
<dbReference type="Pfam" id="PF13288">
    <property type="entry name" value="DXPR_C"/>
    <property type="match status" value="1"/>
</dbReference>
<dbReference type="PIRSF" id="PIRSF006205">
    <property type="entry name" value="Dxp_reductismrs"/>
    <property type="match status" value="1"/>
</dbReference>
<dbReference type="SUPFAM" id="SSF69055">
    <property type="entry name" value="1-deoxy-D-xylulose-5-phosphate reductoisomerase, C-terminal domain"/>
    <property type="match status" value="1"/>
</dbReference>
<dbReference type="SUPFAM" id="SSF55347">
    <property type="entry name" value="Glyceraldehyde-3-phosphate dehydrogenase-like, C-terminal domain"/>
    <property type="match status" value="1"/>
</dbReference>
<dbReference type="SUPFAM" id="SSF51735">
    <property type="entry name" value="NAD(P)-binding Rossmann-fold domains"/>
    <property type="match status" value="1"/>
</dbReference>
<name>DXR_YERPY</name>
<keyword id="KW-0002">3D-structure</keyword>
<keyword id="KW-0414">Isoprene biosynthesis</keyword>
<keyword id="KW-0464">Manganese</keyword>
<keyword id="KW-0479">Metal-binding</keyword>
<keyword id="KW-0521">NADP</keyword>
<keyword id="KW-0560">Oxidoreductase</keyword>
<organism>
    <name type="scientific">Yersinia pseudotuberculosis serotype O:3 (strain YPIII)</name>
    <dbReference type="NCBI Taxonomy" id="502800"/>
    <lineage>
        <taxon>Bacteria</taxon>
        <taxon>Pseudomonadati</taxon>
        <taxon>Pseudomonadota</taxon>
        <taxon>Gammaproteobacteria</taxon>
        <taxon>Enterobacterales</taxon>
        <taxon>Yersiniaceae</taxon>
        <taxon>Yersinia</taxon>
    </lineage>
</organism>
<reference key="1">
    <citation type="submission" date="2008-02" db="EMBL/GenBank/DDBJ databases">
        <title>Complete sequence of Yersinia pseudotuberculosis YPIII.</title>
        <authorList>
            <consortium name="US DOE Joint Genome Institute"/>
            <person name="Copeland A."/>
            <person name="Lucas S."/>
            <person name="Lapidus A."/>
            <person name="Glavina del Rio T."/>
            <person name="Dalin E."/>
            <person name="Tice H."/>
            <person name="Bruce D."/>
            <person name="Goodwin L."/>
            <person name="Pitluck S."/>
            <person name="Munk A.C."/>
            <person name="Brettin T."/>
            <person name="Detter J.C."/>
            <person name="Han C."/>
            <person name="Tapia R."/>
            <person name="Schmutz J."/>
            <person name="Larimer F."/>
            <person name="Land M."/>
            <person name="Hauser L."/>
            <person name="Challacombe J.F."/>
            <person name="Green L."/>
            <person name="Lindler L.E."/>
            <person name="Nikolich M.P."/>
            <person name="Richardson P."/>
        </authorList>
    </citation>
    <scope>NUCLEOTIDE SEQUENCE [LARGE SCALE GENOMIC DNA]</scope>
    <source>
        <strain>YPIII</strain>
    </source>
</reference>
<comment type="function">
    <text evidence="1">Catalyzes the NADPH-dependent rearrangement and reduction of 1-deoxy-D-xylulose-5-phosphate (DXP) to 2-C-methyl-D-erythritol 4-phosphate (MEP).</text>
</comment>
<comment type="catalytic activity">
    <reaction evidence="1">
        <text>2-C-methyl-D-erythritol 4-phosphate + NADP(+) = 1-deoxy-D-xylulose 5-phosphate + NADPH + H(+)</text>
        <dbReference type="Rhea" id="RHEA:13717"/>
        <dbReference type="ChEBI" id="CHEBI:15378"/>
        <dbReference type="ChEBI" id="CHEBI:57783"/>
        <dbReference type="ChEBI" id="CHEBI:57792"/>
        <dbReference type="ChEBI" id="CHEBI:58262"/>
        <dbReference type="ChEBI" id="CHEBI:58349"/>
        <dbReference type="EC" id="1.1.1.267"/>
    </reaction>
    <physiologicalReaction direction="right-to-left" evidence="1">
        <dbReference type="Rhea" id="RHEA:13719"/>
    </physiologicalReaction>
</comment>
<comment type="cofactor">
    <cofactor evidence="1">
        <name>Mg(2+)</name>
        <dbReference type="ChEBI" id="CHEBI:18420"/>
    </cofactor>
    <cofactor evidence="1">
        <name>Mn(2+)</name>
        <dbReference type="ChEBI" id="CHEBI:29035"/>
    </cofactor>
</comment>
<comment type="pathway">
    <text evidence="1">Isoprenoid biosynthesis; isopentenyl diphosphate biosynthesis via DXP pathway; isopentenyl diphosphate from 1-deoxy-D-xylulose 5-phosphate: step 1/6.</text>
</comment>
<comment type="subunit">
    <text evidence="1">Homodimer.</text>
</comment>
<comment type="similarity">
    <text evidence="1">Belongs to the DXR family.</text>
</comment>
<accession>B1JQG4</accession>